<feature type="chain" id="PRO_1000019009" description="1-deoxy-D-xylulose-5-phosphate synthase">
    <location>
        <begin position="1"/>
        <end position="632"/>
    </location>
</feature>
<feature type="binding site" evidence="1">
    <location>
        <position position="79"/>
    </location>
    <ligand>
        <name>thiamine diphosphate</name>
        <dbReference type="ChEBI" id="CHEBI:58937"/>
    </ligand>
</feature>
<feature type="binding site" evidence="1">
    <location>
        <begin position="120"/>
        <end position="122"/>
    </location>
    <ligand>
        <name>thiamine diphosphate</name>
        <dbReference type="ChEBI" id="CHEBI:58937"/>
    </ligand>
</feature>
<feature type="binding site" evidence="1">
    <location>
        <position position="152"/>
    </location>
    <ligand>
        <name>Mg(2+)</name>
        <dbReference type="ChEBI" id="CHEBI:18420"/>
    </ligand>
</feature>
<feature type="binding site" evidence="1">
    <location>
        <begin position="153"/>
        <end position="154"/>
    </location>
    <ligand>
        <name>thiamine diphosphate</name>
        <dbReference type="ChEBI" id="CHEBI:58937"/>
    </ligand>
</feature>
<feature type="binding site" evidence="1">
    <location>
        <position position="181"/>
    </location>
    <ligand>
        <name>Mg(2+)</name>
        <dbReference type="ChEBI" id="CHEBI:18420"/>
    </ligand>
</feature>
<feature type="binding site" evidence="1">
    <location>
        <position position="181"/>
    </location>
    <ligand>
        <name>thiamine diphosphate</name>
        <dbReference type="ChEBI" id="CHEBI:58937"/>
    </ligand>
</feature>
<feature type="binding site" evidence="1">
    <location>
        <position position="293"/>
    </location>
    <ligand>
        <name>thiamine diphosphate</name>
        <dbReference type="ChEBI" id="CHEBI:58937"/>
    </ligand>
</feature>
<feature type="binding site" evidence="1">
    <location>
        <position position="377"/>
    </location>
    <ligand>
        <name>thiamine diphosphate</name>
        <dbReference type="ChEBI" id="CHEBI:58937"/>
    </ligand>
</feature>
<evidence type="ECO:0000255" key="1">
    <source>
        <dbReference type="HAMAP-Rule" id="MF_00315"/>
    </source>
</evidence>
<organism>
    <name type="scientific">Phocaeicola vulgatus (strain ATCC 8482 / DSM 1447 / JCM 5826 / CCUG 4940 / NBRC 14291 / NCTC 11154)</name>
    <name type="common">Bacteroides vulgatus</name>
    <dbReference type="NCBI Taxonomy" id="435590"/>
    <lineage>
        <taxon>Bacteria</taxon>
        <taxon>Pseudomonadati</taxon>
        <taxon>Bacteroidota</taxon>
        <taxon>Bacteroidia</taxon>
        <taxon>Bacteroidales</taxon>
        <taxon>Bacteroidaceae</taxon>
        <taxon>Phocaeicola</taxon>
    </lineage>
</organism>
<reference key="1">
    <citation type="journal article" date="2007" name="PLoS Biol.">
        <title>Evolution of symbiotic bacteria in the distal human intestine.</title>
        <authorList>
            <person name="Xu J."/>
            <person name="Mahowald M.A."/>
            <person name="Ley R.E."/>
            <person name="Lozupone C.A."/>
            <person name="Hamady M."/>
            <person name="Martens E.C."/>
            <person name="Henrissat B."/>
            <person name="Coutinho P.M."/>
            <person name="Minx P."/>
            <person name="Latreille P."/>
            <person name="Cordum H."/>
            <person name="Van Brunt A."/>
            <person name="Kim K."/>
            <person name="Fulton R.S."/>
            <person name="Fulton L.A."/>
            <person name="Clifton S.W."/>
            <person name="Wilson R.K."/>
            <person name="Knight R.D."/>
            <person name="Gordon J.I."/>
        </authorList>
    </citation>
    <scope>NUCLEOTIDE SEQUENCE [LARGE SCALE GENOMIC DNA]</scope>
    <source>
        <strain>ATCC 8482 / DSM 1447 / JCM 5826 / CCUG 4940 / NBRC 14291 / NCTC 11154</strain>
    </source>
</reference>
<protein>
    <recommendedName>
        <fullName evidence="1">1-deoxy-D-xylulose-5-phosphate synthase</fullName>
        <ecNumber evidence="1">2.2.1.7</ecNumber>
    </recommendedName>
    <alternativeName>
        <fullName evidence="1">1-deoxyxylulose-5-phosphate synthase</fullName>
        <shortName evidence="1">DXP synthase</shortName>
        <shortName evidence="1">DXPS</shortName>
    </alternativeName>
</protein>
<sequence>MEQDNLYNLLQSIDTPDDLRHLSADKLPEVCKELRQKIIDELSCNPGHFGSSLGVIELTVALHYVFNTPYDRIVWDVGHQAYGHKILTGRRDAFCTNRKLNGIRPFPSPSESEYDTFTCGHASNSISAALGMAVAAKKHGENNRHVVAVIGDGSMSGGLAFEGLNNASATPNNLLIILNDNNMAIDRSVGGMKQYLLNLQMSEGYNRIRYKISQMFHRWGILNEERRKSLIRFNNSLKSMLVQQQNVFEGMNIRYFGPIDGHDVNNLARVLKEIKDMQGPKLLHIHTTKGKGFGPAEKAATIWHAPGIFDKETGERIVVDTKGMPPLFQDVFGNTLLELAQTNDKIVGVTPAMPSGCSMNILMKAMPERGFDVGIAEGHAVTFSGGMAKDGLLPFCNIYSSFMQRAYDNVIHDIAIQKLNVVLCLDRAGLVGEDGPTHHGAFDLAYMRPIPNLIVASPYNEHELRCLMYTAQLPDKGPFVIRYPRGRGSLVDWKCPMQEIEIGKGRKLKEGKDIAVITLGPIGVQAEKAITHAEQETGKSIAHYDLRFLKPLDESMLHEIGKRFKQVVTVEDGVLKGGMGSAILEFMADNEYNPQIKRIGLPDQFVQHGSVKELYHICGMDEEGIYKVLISF</sequence>
<proteinExistence type="inferred from homology"/>
<keyword id="KW-0414">Isoprene biosynthesis</keyword>
<keyword id="KW-0460">Magnesium</keyword>
<keyword id="KW-0479">Metal-binding</keyword>
<keyword id="KW-0784">Thiamine biosynthesis</keyword>
<keyword id="KW-0786">Thiamine pyrophosphate</keyword>
<keyword id="KW-0808">Transferase</keyword>
<dbReference type="EC" id="2.2.1.7" evidence="1"/>
<dbReference type="EMBL" id="CP000139">
    <property type="protein sequence ID" value="ABR39439.1"/>
    <property type="molecule type" value="Genomic_DNA"/>
</dbReference>
<dbReference type="RefSeq" id="WP_011965312.1">
    <property type="nucleotide sequence ID" value="NZ_JANSWM010000100.1"/>
</dbReference>
<dbReference type="SMR" id="A6L175"/>
<dbReference type="STRING" id="435590.BVU_1763"/>
<dbReference type="PaxDb" id="435590-BVU_1763"/>
<dbReference type="GeneID" id="5302729"/>
<dbReference type="KEGG" id="bvu:BVU_1763"/>
<dbReference type="eggNOG" id="COG1154">
    <property type="taxonomic scope" value="Bacteria"/>
</dbReference>
<dbReference type="HOGENOM" id="CLU_009227_1_4_10"/>
<dbReference type="BioCyc" id="BVUL435590:G1G59-1851-MONOMER"/>
<dbReference type="UniPathway" id="UPA00064">
    <property type="reaction ID" value="UER00091"/>
</dbReference>
<dbReference type="Proteomes" id="UP000002861">
    <property type="component" value="Chromosome"/>
</dbReference>
<dbReference type="GO" id="GO:0005829">
    <property type="term" value="C:cytosol"/>
    <property type="evidence" value="ECO:0007669"/>
    <property type="project" value="TreeGrafter"/>
</dbReference>
<dbReference type="GO" id="GO:0008661">
    <property type="term" value="F:1-deoxy-D-xylulose-5-phosphate synthase activity"/>
    <property type="evidence" value="ECO:0007669"/>
    <property type="project" value="UniProtKB-UniRule"/>
</dbReference>
<dbReference type="GO" id="GO:0000287">
    <property type="term" value="F:magnesium ion binding"/>
    <property type="evidence" value="ECO:0007669"/>
    <property type="project" value="UniProtKB-UniRule"/>
</dbReference>
<dbReference type="GO" id="GO:0030976">
    <property type="term" value="F:thiamine pyrophosphate binding"/>
    <property type="evidence" value="ECO:0007669"/>
    <property type="project" value="UniProtKB-UniRule"/>
</dbReference>
<dbReference type="GO" id="GO:0052865">
    <property type="term" value="P:1-deoxy-D-xylulose 5-phosphate biosynthetic process"/>
    <property type="evidence" value="ECO:0007669"/>
    <property type="project" value="UniProtKB-UniPathway"/>
</dbReference>
<dbReference type="GO" id="GO:0019288">
    <property type="term" value="P:isopentenyl diphosphate biosynthetic process, methylerythritol 4-phosphate pathway"/>
    <property type="evidence" value="ECO:0007669"/>
    <property type="project" value="TreeGrafter"/>
</dbReference>
<dbReference type="GO" id="GO:0016114">
    <property type="term" value="P:terpenoid biosynthetic process"/>
    <property type="evidence" value="ECO:0007669"/>
    <property type="project" value="UniProtKB-UniRule"/>
</dbReference>
<dbReference type="GO" id="GO:0009228">
    <property type="term" value="P:thiamine biosynthetic process"/>
    <property type="evidence" value="ECO:0007669"/>
    <property type="project" value="UniProtKB-UniRule"/>
</dbReference>
<dbReference type="CDD" id="cd02007">
    <property type="entry name" value="TPP_DXS"/>
    <property type="match status" value="1"/>
</dbReference>
<dbReference type="CDD" id="cd07033">
    <property type="entry name" value="TPP_PYR_DXS_TK_like"/>
    <property type="match status" value="1"/>
</dbReference>
<dbReference type="FunFam" id="3.40.50.920:FF:000002">
    <property type="entry name" value="1-deoxy-D-xylulose-5-phosphate synthase"/>
    <property type="match status" value="1"/>
</dbReference>
<dbReference type="Gene3D" id="3.40.50.920">
    <property type="match status" value="1"/>
</dbReference>
<dbReference type="Gene3D" id="3.40.50.970">
    <property type="match status" value="2"/>
</dbReference>
<dbReference type="HAMAP" id="MF_00315">
    <property type="entry name" value="DXP_synth"/>
    <property type="match status" value="1"/>
</dbReference>
<dbReference type="InterPro" id="IPR005477">
    <property type="entry name" value="Dxylulose-5-P_synthase"/>
</dbReference>
<dbReference type="InterPro" id="IPR029061">
    <property type="entry name" value="THDP-binding"/>
</dbReference>
<dbReference type="InterPro" id="IPR009014">
    <property type="entry name" value="Transketo_C/PFOR_II"/>
</dbReference>
<dbReference type="InterPro" id="IPR005475">
    <property type="entry name" value="Transketolase-like_Pyr-bd"/>
</dbReference>
<dbReference type="InterPro" id="IPR020826">
    <property type="entry name" value="Transketolase_BS"/>
</dbReference>
<dbReference type="InterPro" id="IPR033248">
    <property type="entry name" value="Transketolase_C"/>
</dbReference>
<dbReference type="NCBIfam" id="TIGR00204">
    <property type="entry name" value="dxs"/>
    <property type="match status" value="1"/>
</dbReference>
<dbReference type="NCBIfam" id="NF003933">
    <property type="entry name" value="PRK05444.2-2"/>
    <property type="match status" value="1"/>
</dbReference>
<dbReference type="PANTHER" id="PTHR43322">
    <property type="entry name" value="1-D-DEOXYXYLULOSE 5-PHOSPHATE SYNTHASE-RELATED"/>
    <property type="match status" value="1"/>
</dbReference>
<dbReference type="PANTHER" id="PTHR43322:SF5">
    <property type="entry name" value="1-DEOXY-D-XYLULOSE-5-PHOSPHATE SYNTHASE, CHLOROPLASTIC"/>
    <property type="match status" value="1"/>
</dbReference>
<dbReference type="Pfam" id="PF13292">
    <property type="entry name" value="DXP_synthase_N"/>
    <property type="match status" value="1"/>
</dbReference>
<dbReference type="Pfam" id="PF02779">
    <property type="entry name" value="Transket_pyr"/>
    <property type="match status" value="1"/>
</dbReference>
<dbReference type="Pfam" id="PF02780">
    <property type="entry name" value="Transketolase_C"/>
    <property type="match status" value="1"/>
</dbReference>
<dbReference type="SMART" id="SM00861">
    <property type="entry name" value="Transket_pyr"/>
    <property type="match status" value="1"/>
</dbReference>
<dbReference type="SUPFAM" id="SSF52518">
    <property type="entry name" value="Thiamin diphosphate-binding fold (THDP-binding)"/>
    <property type="match status" value="2"/>
</dbReference>
<dbReference type="SUPFAM" id="SSF52922">
    <property type="entry name" value="TK C-terminal domain-like"/>
    <property type="match status" value="1"/>
</dbReference>
<dbReference type="PROSITE" id="PS00802">
    <property type="entry name" value="TRANSKETOLASE_2"/>
    <property type="match status" value="1"/>
</dbReference>
<accession>A6L175</accession>
<comment type="function">
    <text evidence="1">Catalyzes the acyloin condensation reaction between C atoms 2 and 3 of pyruvate and glyceraldehyde 3-phosphate to yield 1-deoxy-D-xylulose-5-phosphate (DXP).</text>
</comment>
<comment type="catalytic activity">
    <reaction evidence="1">
        <text>D-glyceraldehyde 3-phosphate + pyruvate + H(+) = 1-deoxy-D-xylulose 5-phosphate + CO2</text>
        <dbReference type="Rhea" id="RHEA:12605"/>
        <dbReference type="ChEBI" id="CHEBI:15361"/>
        <dbReference type="ChEBI" id="CHEBI:15378"/>
        <dbReference type="ChEBI" id="CHEBI:16526"/>
        <dbReference type="ChEBI" id="CHEBI:57792"/>
        <dbReference type="ChEBI" id="CHEBI:59776"/>
        <dbReference type="EC" id="2.2.1.7"/>
    </reaction>
</comment>
<comment type="cofactor">
    <cofactor evidence="1">
        <name>Mg(2+)</name>
        <dbReference type="ChEBI" id="CHEBI:18420"/>
    </cofactor>
    <text evidence="1">Binds 1 Mg(2+) ion per subunit.</text>
</comment>
<comment type="cofactor">
    <cofactor evidence="1">
        <name>thiamine diphosphate</name>
        <dbReference type="ChEBI" id="CHEBI:58937"/>
    </cofactor>
    <text evidence="1">Binds 1 thiamine pyrophosphate per subunit.</text>
</comment>
<comment type="pathway">
    <text evidence="1">Metabolic intermediate biosynthesis; 1-deoxy-D-xylulose 5-phosphate biosynthesis; 1-deoxy-D-xylulose 5-phosphate from D-glyceraldehyde 3-phosphate and pyruvate: step 1/1.</text>
</comment>
<comment type="subunit">
    <text evidence="1">Homodimer.</text>
</comment>
<comment type="similarity">
    <text evidence="1">Belongs to the transketolase family. DXPS subfamily.</text>
</comment>
<gene>
    <name evidence="1" type="primary">dxs</name>
    <name type="ordered locus">BVU_1763</name>
</gene>
<name>DXS_PHOV8</name>